<feature type="propeptide" id="PRO_0000431136" evidence="1">
    <location>
        <begin position="1"/>
        <end position="14"/>
    </location>
</feature>
<feature type="chain" id="PRO_0000361366" description="Photosystem II CP43 reaction center protein" evidence="1">
    <location>
        <begin position="15"/>
        <end position="473"/>
    </location>
</feature>
<feature type="transmembrane region" description="Helical" evidence="1">
    <location>
        <begin position="69"/>
        <end position="93"/>
    </location>
</feature>
<feature type="transmembrane region" description="Helical" evidence="1">
    <location>
        <begin position="134"/>
        <end position="155"/>
    </location>
</feature>
<feature type="transmembrane region" description="Helical" evidence="1">
    <location>
        <begin position="178"/>
        <end position="200"/>
    </location>
</feature>
<feature type="transmembrane region" description="Helical" evidence="1">
    <location>
        <begin position="255"/>
        <end position="275"/>
    </location>
</feature>
<feature type="transmembrane region" description="Helical" evidence="1">
    <location>
        <begin position="291"/>
        <end position="312"/>
    </location>
</feature>
<feature type="transmembrane region" description="Helical" evidence="1">
    <location>
        <begin position="447"/>
        <end position="471"/>
    </location>
</feature>
<feature type="binding site" evidence="1">
    <location>
        <position position="367"/>
    </location>
    <ligand>
        <name>[CaMn4O5] cluster</name>
        <dbReference type="ChEBI" id="CHEBI:189552"/>
    </ligand>
</feature>
<feature type="modified residue" description="N-acetylthreonine" evidence="1">
    <location>
        <position position="15"/>
    </location>
</feature>
<feature type="modified residue" description="Phosphothreonine" evidence="1">
    <location>
        <position position="15"/>
    </location>
</feature>
<reference key="1">
    <citation type="journal article" date="2007" name="BMC Plant Biol.">
        <title>Complete plastid genome sequences suggest strong selection for retention of photosynthetic genes in the parasitic plant genus Cuscuta.</title>
        <authorList>
            <person name="McNeal J.R."/>
            <person name="Kuehl J.V."/>
            <person name="Boore J.L."/>
            <person name="dePamphilis C.W."/>
        </authorList>
    </citation>
    <scope>NUCLEOTIDE SEQUENCE [LARGE SCALE GENOMIC DNA]</scope>
</reference>
<proteinExistence type="inferred from homology"/>
<sequence>MKTLYSLRRFSHVETLFNTTLAVAGRDQETTGFAWWAGNARLINLSGKLLGAHVAHAGLIVFWAGAMNLFEVAHFGPEKPMYEQGLILLPHLATLGWGVGPGGEIIDTFPYFVSGVLHLISSAVLGFGGIYHALLGPEIIEESFPLFRYVWKDRNKMTTILGIHLILLGLGAFLLVFKALYFGGVYDTWAPGGGDVRKITNLTLSPSIIFGFLLKSPFGGDGWIVSVDDLEDIIGGHVWVGSICIVGGIWHILTKPFAWARRALVWSGEAYLSYSLGALSIFGFTACCFVWFNNTAYPSEFYGPTGPEASQAQAFTFLVRDQRLGANVGAAQGPTGLGKYLMRSPTGEVIFGGETMRFWDLRAPWLEPLRGPNGLDLNRLKKDIQPWQERRSAEYMTHAPLGSLNSVGGVATEINAVNYVSPRSWLATSHFCLGFFFFVGHLWHAGRARAAAAGFEKGIDRDFEPVLSMTPLN</sequence>
<comment type="function">
    <text evidence="1">One of the components of the core complex of photosystem II (PSII). It binds chlorophyll and helps catalyze the primary light-induced photochemical processes of PSII. PSII is a light-driven water:plastoquinone oxidoreductase, using light energy to abstract electrons from H(2)O, generating O(2) and a proton gradient subsequently used for ATP formation.</text>
</comment>
<comment type="cofactor">
    <text evidence="1">Binds multiple chlorophylls and provides some of the ligands for the Ca-4Mn-5O cluster of the oxygen-evolving complex. It may also provide a ligand for a Cl- that is required for oxygen evolution. PSII binds additional chlorophylls, carotenoids and specific lipids.</text>
</comment>
<comment type="subunit">
    <text evidence="1">PSII is composed of 1 copy each of membrane proteins PsbA, PsbB, PsbC, PsbD, PsbE, PsbF, PsbH, PsbI, PsbJ, PsbK, PsbL, PsbM, PsbT, PsbX, PsbY, PsbZ, Psb30/Ycf12, at least 3 peripheral proteins of the oxygen-evolving complex and a large number of cofactors. It forms dimeric complexes.</text>
</comment>
<comment type="subcellular location">
    <subcellularLocation>
        <location evidence="2">Plastid membrane</location>
        <topology evidence="2">Multi-pass membrane protein</topology>
    </subcellularLocation>
</comment>
<comment type="similarity">
    <text evidence="1">Belongs to the PsbB/PsbC family. PsbC subfamily.</text>
</comment>
<comment type="caution">
    <text evidence="2">Only inflorescences, fruits, starved seedlings and stressed stem tips are green in this organism.</text>
</comment>
<keyword id="KW-0007">Acetylation</keyword>
<keyword id="KW-0148">Chlorophyll</keyword>
<keyword id="KW-0157">Chromophore</keyword>
<keyword id="KW-0464">Manganese</keyword>
<keyword id="KW-0472">Membrane</keyword>
<keyword id="KW-0479">Metal-binding</keyword>
<keyword id="KW-0597">Phosphoprotein</keyword>
<keyword id="KW-0602">Photosynthesis</keyword>
<keyword id="KW-0604">Photosystem II</keyword>
<keyword id="KW-0934">Plastid</keyword>
<keyword id="KW-0812">Transmembrane</keyword>
<keyword id="KW-1133">Transmembrane helix</keyword>
<protein>
    <recommendedName>
        <fullName evidence="1">Photosystem II CP43 reaction center protein</fullName>
    </recommendedName>
    <alternativeName>
        <fullName evidence="1">PSII 43 kDa protein</fullName>
    </alternativeName>
    <alternativeName>
        <fullName evidence="1">Protein CP-43</fullName>
    </alternativeName>
</protein>
<gene>
    <name evidence="1" type="primary">psbC</name>
</gene>
<geneLocation type="plastid"/>
<organism>
    <name type="scientific">Cuscuta obtusiflora</name>
    <name type="common">Peruvian dodder</name>
    <dbReference type="NCBI Taxonomy" id="437280"/>
    <lineage>
        <taxon>Eukaryota</taxon>
        <taxon>Viridiplantae</taxon>
        <taxon>Streptophyta</taxon>
        <taxon>Embryophyta</taxon>
        <taxon>Tracheophyta</taxon>
        <taxon>Spermatophyta</taxon>
        <taxon>Magnoliopsida</taxon>
        <taxon>eudicotyledons</taxon>
        <taxon>Gunneridae</taxon>
        <taxon>Pentapetalae</taxon>
        <taxon>asterids</taxon>
        <taxon>lamiids</taxon>
        <taxon>Solanales</taxon>
        <taxon>Convolvulaceae</taxon>
        <taxon>Cuscuteae</taxon>
        <taxon>Cuscuta</taxon>
        <taxon>Cuscuta subgen. Grammica</taxon>
        <taxon>Cuscuta sect. Cleistogrammica</taxon>
    </lineage>
</organism>
<name>PSBC_CUSOB</name>
<evidence type="ECO:0000255" key="1">
    <source>
        <dbReference type="HAMAP-Rule" id="MF_01496"/>
    </source>
</evidence>
<evidence type="ECO:0000305" key="2"/>
<accession>A8W3I3</accession>
<dbReference type="EMBL" id="EU189133">
    <property type="protein sequence ID" value="ABW20558.1"/>
    <property type="molecule type" value="Genomic_DNA"/>
</dbReference>
<dbReference type="RefSeq" id="YP_001531213.1">
    <property type="nucleotide sequence ID" value="NC_009949.1"/>
</dbReference>
<dbReference type="SMR" id="A8W3I3"/>
<dbReference type="GeneID" id="5714802"/>
<dbReference type="GO" id="GO:0009523">
    <property type="term" value="C:photosystem II"/>
    <property type="evidence" value="ECO:0007669"/>
    <property type="project" value="UniProtKB-KW"/>
</dbReference>
<dbReference type="GO" id="GO:0042170">
    <property type="term" value="C:plastid membrane"/>
    <property type="evidence" value="ECO:0007669"/>
    <property type="project" value="UniProtKB-SubCell"/>
</dbReference>
<dbReference type="GO" id="GO:0042651">
    <property type="term" value="C:thylakoid membrane"/>
    <property type="evidence" value="ECO:0007669"/>
    <property type="project" value="UniProtKB-UniRule"/>
</dbReference>
<dbReference type="GO" id="GO:0016168">
    <property type="term" value="F:chlorophyll binding"/>
    <property type="evidence" value="ECO:0007669"/>
    <property type="project" value="UniProtKB-UniRule"/>
</dbReference>
<dbReference type="GO" id="GO:0045156">
    <property type="term" value="F:electron transporter, transferring electrons within the cyclic electron transport pathway of photosynthesis activity"/>
    <property type="evidence" value="ECO:0007669"/>
    <property type="project" value="InterPro"/>
</dbReference>
<dbReference type="GO" id="GO:0046872">
    <property type="term" value="F:metal ion binding"/>
    <property type="evidence" value="ECO:0007669"/>
    <property type="project" value="UniProtKB-KW"/>
</dbReference>
<dbReference type="GO" id="GO:0009772">
    <property type="term" value="P:photosynthetic electron transport in photosystem II"/>
    <property type="evidence" value="ECO:0007669"/>
    <property type="project" value="InterPro"/>
</dbReference>
<dbReference type="FunFam" id="1.10.10.670:FF:000001">
    <property type="entry name" value="Photosystem II CP43 reaction center protein"/>
    <property type="match status" value="1"/>
</dbReference>
<dbReference type="Gene3D" id="1.10.10.670">
    <property type="entry name" value="photosystem ii from thermosynechococcus elongatus"/>
    <property type="match status" value="1"/>
</dbReference>
<dbReference type="HAMAP" id="MF_01496">
    <property type="entry name" value="PSII_PsbC_CP43"/>
    <property type="match status" value="1"/>
</dbReference>
<dbReference type="InterPro" id="IPR000932">
    <property type="entry name" value="PS_antenna-like"/>
</dbReference>
<dbReference type="InterPro" id="IPR036001">
    <property type="entry name" value="PS_II_antenna-like_sf"/>
</dbReference>
<dbReference type="InterPro" id="IPR005869">
    <property type="entry name" value="PSII_PsbC"/>
</dbReference>
<dbReference type="InterPro" id="IPR044900">
    <property type="entry name" value="PSII_PsbC_sf"/>
</dbReference>
<dbReference type="NCBIfam" id="TIGR01153">
    <property type="entry name" value="psbC"/>
    <property type="match status" value="1"/>
</dbReference>
<dbReference type="Pfam" id="PF00421">
    <property type="entry name" value="PSII"/>
    <property type="match status" value="1"/>
</dbReference>
<dbReference type="SUPFAM" id="SSF161077">
    <property type="entry name" value="Photosystem II antenna protein-like"/>
    <property type="match status" value="1"/>
</dbReference>